<reference key="1">
    <citation type="journal article" date="2011" name="J. Bacteriol.">
        <title>Complete genome sequence of the plant growth-promoting endophyte Burkholderia phytofirmans strain PsJN.</title>
        <authorList>
            <person name="Weilharter A."/>
            <person name="Mitter B."/>
            <person name="Shin M.V."/>
            <person name="Chain P.S."/>
            <person name="Nowak J."/>
            <person name="Sessitsch A."/>
        </authorList>
    </citation>
    <scope>NUCLEOTIDE SEQUENCE [LARGE SCALE GENOMIC DNA]</scope>
    <source>
        <strain>DSM 17436 / LMG 22146 / PsJN</strain>
    </source>
</reference>
<organism>
    <name type="scientific">Paraburkholderia phytofirmans (strain DSM 17436 / LMG 22146 / PsJN)</name>
    <name type="common">Burkholderia phytofirmans</name>
    <dbReference type="NCBI Taxonomy" id="398527"/>
    <lineage>
        <taxon>Bacteria</taxon>
        <taxon>Pseudomonadati</taxon>
        <taxon>Pseudomonadota</taxon>
        <taxon>Betaproteobacteria</taxon>
        <taxon>Burkholderiales</taxon>
        <taxon>Burkholderiaceae</taxon>
        <taxon>Paraburkholderia</taxon>
    </lineage>
</organism>
<accession>B2SY66</accession>
<keyword id="KW-0997">Cell inner membrane</keyword>
<keyword id="KW-1003">Cell membrane</keyword>
<keyword id="KW-0444">Lipid biosynthesis</keyword>
<keyword id="KW-0443">Lipid metabolism</keyword>
<keyword id="KW-0472">Membrane</keyword>
<keyword id="KW-0594">Phospholipid biosynthesis</keyword>
<keyword id="KW-1208">Phospholipid metabolism</keyword>
<keyword id="KW-0808">Transferase</keyword>
<keyword id="KW-0812">Transmembrane</keyword>
<keyword id="KW-1133">Transmembrane helix</keyword>
<evidence type="ECO:0000255" key="1">
    <source>
        <dbReference type="HAMAP-Rule" id="MF_01043"/>
    </source>
</evidence>
<proteinExistence type="inferred from homology"/>
<name>PLSY_PARPJ</name>
<dbReference type="EC" id="2.3.1.275" evidence="1"/>
<dbReference type="EMBL" id="CP001052">
    <property type="protein sequence ID" value="ACD17601.1"/>
    <property type="molecule type" value="Genomic_DNA"/>
</dbReference>
<dbReference type="RefSeq" id="WP_012434171.1">
    <property type="nucleotide sequence ID" value="NC_010681.1"/>
</dbReference>
<dbReference type="SMR" id="B2SY66"/>
<dbReference type="STRING" id="398527.Bphyt_3209"/>
<dbReference type="KEGG" id="bpy:Bphyt_3209"/>
<dbReference type="eggNOG" id="COG0344">
    <property type="taxonomic scope" value="Bacteria"/>
</dbReference>
<dbReference type="HOGENOM" id="CLU_081254_0_0_4"/>
<dbReference type="OrthoDB" id="9777124at2"/>
<dbReference type="UniPathway" id="UPA00085"/>
<dbReference type="Proteomes" id="UP000001739">
    <property type="component" value="Chromosome 1"/>
</dbReference>
<dbReference type="GO" id="GO:0005886">
    <property type="term" value="C:plasma membrane"/>
    <property type="evidence" value="ECO:0007669"/>
    <property type="project" value="UniProtKB-SubCell"/>
</dbReference>
<dbReference type="GO" id="GO:0043772">
    <property type="term" value="F:acyl-phosphate glycerol-3-phosphate acyltransferase activity"/>
    <property type="evidence" value="ECO:0007669"/>
    <property type="project" value="UniProtKB-UniRule"/>
</dbReference>
<dbReference type="GO" id="GO:0008654">
    <property type="term" value="P:phospholipid biosynthetic process"/>
    <property type="evidence" value="ECO:0007669"/>
    <property type="project" value="UniProtKB-UniRule"/>
</dbReference>
<dbReference type="HAMAP" id="MF_01043">
    <property type="entry name" value="PlsY"/>
    <property type="match status" value="1"/>
</dbReference>
<dbReference type="InterPro" id="IPR003811">
    <property type="entry name" value="G3P_acylTferase_PlsY"/>
</dbReference>
<dbReference type="NCBIfam" id="TIGR00023">
    <property type="entry name" value="glycerol-3-phosphate 1-O-acyltransferase PlsY"/>
    <property type="match status" value="1"/>
</dbReference>
<dbReference type="PANTHER" id="PTHR30309:SF0">
    <property type="entry name" value="GLYCEROL-3-PHOSPHATE ACYLTRANSFERASE-RELATED"/>
    <property type="match status" value="1"/>
</dbReference>
<dbReference type="PANTHER" id="PTHR30309">
    <property type="entry name" value="INNER MEMBRANE PROTEIN YGIH"/>
    <property type="match status" value="1"/>
</dbReference>
<dbReference type="Pfam" id="PF02660">
    <property type="entry name" value="G3P_acyltransf"/>
    <property type="match status" value="1"/>
</dbReference>
<dbReference type="SMART" id="SM01207">
    <property type="entry name" value="G3P_acyltransf"/>
    <property type="match status" value="1"/>
</dbReference>
<comment type="function">
    <text evidence="1">Catalyzes the transfer of an acyl group from acyl-phosphate (acyl-PO(4)) to glycerol-3-phosphate (G3P) to form lysophosphatidic acid (LPA). This enzyme utilizes acyl-phosphate as fatty acyl donor, but not acyl-CoA or acyl-ACP.</text>
</comment>
<comment type="catalytic activity">
    <reaction evidence="1">
        <text>an acyl phosphate + sn-glycerol 3-phosphate = a 1-acyl-sn-glycero-3-phosphate + phosphate</text>
        <dbReference type="Rhea" id="RHEA:34075"/>
        <dbReference type="ChEBI" id="CHEBI:43474"/>
        <dbReference type="ChEBI" id="CHEBI:57597"/>
        <dbReference type="ChEBI" id="CHEBI:57970"/>
        <dbReference type="ChEBI" id="CHEBI:59918"/>
        <dbReference type="EC" id="2.3.1.275"/>
    </reaction>
</comment>
<comment type="pathway">
    <text evidence="1">Lipid metabolism; phospholipid metabolism.</text>
</comment>
<comment type="subunit">
    <text evidence="1">Probably interacts with PlsX.</text>
</comment>
<comment type="subcellular location">
    <subcellularLocation>
        <location evidence="1">Cell inner membrane</location>
        <topology evidence="1">Multi-pass membrane protein</topology>
    </subcellularLocation>
</comment>
<comment type="similarity">
    <text evidence="1">Belongs to the PlsY family.</text>
</comment>
<sequence>MQNLIVAVVAYLIGSVSFAVIVSAAMGLDDPRSYGSGNPGATNVLRSGNKKAAILTLIGDAFKGWLPVWFVVHYGARYGLDETSVAIASVAVFLGHLYPVFFRFKGGKGVATAAGVLLAINPILGVATLLTWLIVAFFTRYSSLAALAAAVFAPIFDGFLFGPHVIALAIVVMSSLLVWRHRGNIAKLMRGQESRIGDKKKADAAAKPAGGSDV</sequence>
<gene>
    <name evidence="1" type="primary">plsY</name>
    <name type="ordered locus">Bphyt_3209</name>
</gene>
<protein>
    <recommendedName>
        <fullName evidence="1">Glycerol-3-phosphate acyltransferase</fullName>
    </recommendedName>
    <alternativeName>
        <fullName evidence="1">Acyl-PO4 G3P acyltransferase</fullName>
    </alternativeName>
    <alternativeName>
        <fullName evidence="1">Acyl-phosphate--glycerol-3-phosphate acyltransferase</fullName>
    </alternativeName>
    <alternativeName>
        <fullName evidence="1">G3P acyltransferase</fullName>
        <shortName evidence="1">GPAT</shortName>
        <ecNumber evidence="1">2.3.1.275</ecNumber>
    </alternativeName>
    <alternativeName>
        <fullName evidence="1">Lysophosphatidic acid synthase</fullName>
        <shortName evidence="1">LPA synthase</shortName>
    </alternativeName>
</protein>
<feature type="chain" id="PRO_1000136072" description="Glycerol-3-phosphate acyltransferase">
    <location>
        <begin position="1"/>
        <end position="214"/>
    </location>
</feature>
<feature type="transmembrane region" description="Helical" evidence="1">
    <location>
        <begin position="4"/>
        <end position="24"/>
    </location>
</feature>
<feature type="transmembrane region" description="Helical" evidence="1">
    <location>
        <begin position="52"/>
        <end position="72"/>
    </location>
</feature>
<feature type="transmembrane region" description="Helical" evidence="1">
    <location>
        <begin position="82"/>
        <end position="102"/>
    </location>
</feature>
<feature type="transmembrane region" description="Helical" evidence="1">
    <location>
        <begin position="118"/>
        <end position="138"/>
    </location>
</feature>
<feature type="transmembrane region" description="Helical" evidence="1">
    <location>
        <begin position="159"/>
        <end position="179"/>
    </location>
</feature>